<accession>C9NUM5</accession>
<protein>
    <recommendedName>
        <fullName>D-galactonate dehydratase family member VIC002985</fullName>
    </recommendedName>
</protein>
<name>IMND1_VIBCR</name>
<proteinExistence type="inferred from homology"/>
<evidence type="ECO:0000250" key="1"/>
<evidence type="ECO:0000269" key="2">
    <source>
    </source>
</evidence>
<evidence type="ECO:0000305" key="3"/>
<sequence>MNTTIITDVECIITKPDRHNLITVIVHTNNGTVGYGCATFQQRPLAVKTMVDEYLKPLLIGKDANNIEDLWQMMMVNAYWRNGPVINNAVSGVDMALWDIKAKQAKMPLHQLFGGKSRDAIAVYTHATSDSMEGLYESIDNYLKQGYRHIRCQLGFYGGVPEALHTTQNPTVGSYYDQDQYVENTVTMFKLLREKYGNQFHILHDVHERLFPNQAVQFAKDVEKYKPYFIEDILPPNQTEWLDNIRSQTSVSLGLGELFNNPEEWKSLIINRRIDFIRCHVSQIGGITPALKLGHLCQTFGVRIAWHCPPDMTPIGAAVNTHLNVHLHNAAIQEHVEYKENTRKVFPGASEPKNGYLYASELSGIGVEIDTEVAADFPVTYRPHEWTQSRLPDGTIHTP</sequence>
<keyword id="KW-0460">Magnesium</keyword>
<keyword id="KW-0479">Metal-binding</keyword>
<organism>
    <name type="scientific">Vibrio coralliilyticus (strain ATCC BAA-450 / DSM 19607 / CCUG 48437 / LMG 20984 / YB1)</name>
    <dbReference type="NCBI Taxonomy" id="675814"/>
    <lineage>
        <taxon>Bacteria</taxon>
        <taxon>Pseudomonadati</taxon>
        <taxon>Pseudomonadota</taxon>
        <taxon>Gammaproteobacteria</taxon>
        <taxon>Vibrionales</taxon>
        <taxon>Vibrionaceae</taxon>
        <taxon>Vibrio</taxon>
    </lineage>
</organism>
<comment type="function">
    <text evidence="2">Has no detectable activity with D-mannonate and with a panel of 70 other acid sugars (in vitro), in spite of the conservation of the residues that are expected to be important for catalytic activity and cofactor binding. May have evolved a divergent function.</text>
</comment>
<comment type="similarity">
    <text evidence="3">Belongs to the mandelate racemase/muconate lactonizing enzyme family. GalD subfamily.</text>
</comment>
<gene>
    <name type="ORF">VIC_002985</name>
</gene>
<feature type="chain" id="PRO_0000429918" description="D-galactonate dehydratase family member VIC002985">
    <location>
        <begin position="1"/>
        <end position="399"/>
    </location>
</feature>
<feature type="binding site" evidence="1">
    <location>
        <position position="205"/>
    </location>
    <ligand>
        <name>Mg(2+)</name>
        <dbReference type="ChEBI" id="CHEBI:18420"/>
    </ligand>
</feature>
<feature type="binding site" evidence="1">
    <location>
        <position position="207"/>
    </location>
    <ligand>
        <name>D-arabinonate</name>
        <dbReference type="ChEBI" id="CHEBI:16157"/>
    </ligand>
</feature>
<feature type="binding site" evidence="1">
    <location>
        <position position="231"/>
    </location>
    <ligand>
        <name>Mg(2+)</name>
        <dbReference type="ChEBI" id="CHEBI:18420"/>
    </ligand>
</feature>
<feature type="binding site" evidence="1">
    <location>
        <position position="257"/>
    </location>
    <ligand>
        <name>D-arabinonate</name>
        <dbReference type="ChEBI" id="CHEBI:16157"/>
    </ligand>
</feature>
<feature type="binding site" evidence="1">
    <location>
        <position position="257"/>
    </location>
    <ligand>
        <name>Mg(2+)</name>
        <dbReference type="ChEBI" id="CHEBI:18420"/>
    </ligand>
</feature>
<feature type="binding site" evidence="1">
    <location>
        <position position="278"/>
    </location>
    <ligand>
        <name>D-arabinonate</name>
        <dbReference type="ChEBI" id="CHEBI:16157"/>
    </ligand>
</feature>
<feature type="binding site" evidence="1">
    <location>
        <position position="307"/>
    </location>
    <ligand>
        <name>D-arabinonate</name>
        <dbReference type="ChEBI" id="CHEBI:16157"/>
    </ligand>
</feature>
<feature type="binding site" evidence="1">
    <location>
        <position position="334"/>
    </location>
    <ligand>
        <name>D-arabinonate</name>
        <dbReference type="ChEBI" id="CHEBI:16157"/>
    </ligand>
</feature>
<dbReference type="EMBL" id="ACZN01000017">
    <property type="protein sequence ID" value="EEX31886.1"/>
    <property type="molecule type" value="Genomic_DNA"/>
</dbReference>
<dbReference type="RefSeq" id="WP_006960953.1">
    <property type="nucleotide sequence ID" value="NZ_ACZN01000017.1"/>
</dbReference>
<dbReference type="SMR" id="C9NUM5"/>
<dbReference type="GO" id="GO:0000287">
    <property type="term" value="F:magnesium ion binding"/>
    <property type="evidence" value="ECO:0000250"/>
    <property type="project" value="UniProtKB"/>
</dbReference>
<dbReference type="GO" id="GO:0009063">
    <property type="term" value="P:amino acid catabolic process"/>
    <property type="evidence" value="ECO:0007669"/>
    <property type="project" value="InterPro"/>
</dbReference>
<dbReference type="FunFam" id="3.20.20.120:FF:000011">
    <property type="entry name" value="D-galactonate dehydratase family member VSWAT3_13707"/>
    <property type="match status" value="1"/>
</dbReference>
<dbReference type="FunFam" id="3.30.390.10:FF:000002">
    <property type="entry name" value="D-galactonate dehydratase family protein"/>
    <property type="match status" value="1"/>
</dbReference>
<dbReference type="Gene3D" id="3.20.20.120">
    <property type="entry name" value="Enolase-like C-terminal domain"/>
    <property type="match status" value="1"/>
</dbReference>
<dbReference type="Gene3D" id="3.30.390.10">
    <property type="entry name" value="Enolase-like, N-terminal domain"/>
    <property type="match status" value="1"/>
</dbReference>
<dbReference type="InterPro" id="IPR034589">
    <property type="entry name" value="D-mannonate_dehydratase-like"/>
</dbReference>
<dbReference type="InterPro" id="IPR034593">
    <property type="entry name" value="DgoD-like"/>
</dbReference>
<dbReference type="InterPro" id="IPR036849">
    <property type="entry name" value="Enolase-like_C_sf"/>
</dbReference>
<dbReference type="InterPro" id="IPR029017">
    <property type="entry name" value="Enolase-like_N"/>
</dbReference>
<dbReference type="InterPro" id="IPR029065">
    <property type="entry name" value="Enolase_C-like"/>
</dbReference>
<dbReference type="InterPro" id="IPR018110">
    <property type="entry name" value="Mandel_Rmase/mucon_lact_enz_CS"/>
</dbReference>
<dbReference type="InterPro" id="IPR013342">
    <property type="entry name" value="Mandelate_racemase_C"/>
</dbReference>
<dbReference type="InterPro" id="IPR013341">
    <property type="entry name" value="Mandelate_racemase_N_dom"/>
</dbReference>
<dbReference type="PANTHER" id="PTHR48080">
    <property type="entry name" value="D-GALACTONATE DEHYDRATASE-RELATED"/>
    <property type="match status" value="1"/>
</dbReference>
<dbReference type="PANTHER" id="PTHR48080:SF6">
    <property type="entry name" value="STARVATION-SENSING PROTEIN RSPA"/>
    <property type="match status" value="1"/>
</dbReference>
<dbReference type="Pfam" id="PF13378">
    <property type="entry name" value="MR_MLE_C"/>
    <property type="match status" value="1"/>
</dbReference>
<dbReference type="Pfam" id="PF02746">
    <property type="entry name" value="MR_MLE_N"/>
    <property type="match status" value="1"/>
</dbReference>
<dbReference type="SFLD" id="SFLDS00001">
    <property type="entry name" value="Enolase"/>
    <property type="match status" value="1"/>
</dbReference>
<dbReference type="SFLD" id="SFLDG00033">
    <property type="entry name" value="mannonate_dehydratase"/>
    <property type="match status" value="1"/>
</dbReference>
<dbReference type="SMART" id="SM00922">
    <property type="entry name" value="MR_MLE"/>
    <property type="match status" value="1"/>
</dbReference>
<dbReference type="SUPFAM" id="SSF51604">
    <property type="entry name" value="Enolase C-terminal domain-like"/>
    <property type="match status" value="1"/>
</dbReference>
<dbReference type="SUPFAM" id="SSF54826">
    <property type="entry name" value="Enolase N-terminal domain-like"/>
    <property type="match status" value="1"/>
</dbReference>
<dbReference type="PROSITE" id="PS00908">
    <property type="entry name" value="MR_MLE_1"/>
    <property type="match status" value="1"/>
</dbReference>
<reference key="1">
    <citation type="journal article" date="2012" name="ISME J.">
        <title>Temperature regulation of virulence factors in the pathogen Vibrio coralliilyticus.</title>
        <authorList>
            <person name="Kimes N.E."/>
            <person name="Grim C.J."/>
            <person name="Johnson W.R."/>
            <person name="Hasan N.A."/>
            <person name="Tall B.D."/>
            <person name="Kothary M.H."/>
            <person name="Kiss H."/>
            <person name="Munk A.C."/>
            <person name="Tapia R."/>
            <person name="Green L."/>
            <person name="Detter C."/>
            <person name="Bruce D.C."/>
            <person name="Brettin T.S."/>
            <person name="Colwell R.R."/>
            <person name="Morris P.J."/>
        </authorList>
    </citation>
    <scope>NUCLEOTIDE SEQUENCE [LARGE SCALE GENOMIC DNA]</scope>
    <source>
        <strain>ATCC BAA-450 / DSM 19607 / CCUG 48437 / LMG 20984 / YB1</strain>
    </source>
</reference>
<reference key="2">
    <citation type="journal article" date="2014" name="Biochemistry">
        <title>Discovery of function in the enolase superfamily: D-mannonate and D-gluconate dehydratases in the D-mannonate dehydratase subgroup.</title>
        <authorList>
            <person name="Wichelecki D.J."/>
            <person name="Balthazor B.M."/>
            <person name="Chau A.C."/>
            <person name="Vetting M.W."/>
            <person name="Fedorov A.A."/>
            <person name="Fedorov E.V."/>
            <person name="Lukk T."/>
            <person name="Patskovsky Y.V."/>
            <person name="Stead M.B."/>
            <person name="Hillerich B.S."/>
            <person name="Seidel R.D."/>
            <person name="Almo S.C."/>
            <person name="Gerlt J.A."/>
        </authorList>
    </citation>
    <scope>FUNCTION</scope>
    <scope>LACK OF D-MANNONATE DEHYDRATASE ACTIVITY</scope>
    <source>
        <strain>ATCC BAA-450 / DSM 19607 / CCUG 48437 / LMG 20984 / YB1</strain>
    </source>
</reference>